<comment type="function">
    <text evidence="1">Involved in the small subunit (SSU) processome assembly and function, and in the 18S rRNA synthesis. Required for the early cleavages at sites A0, A1 and A2 (By similarity).</text>
</comment>
<comment type="subcellular location">
    <subcellularLocation>
        <location evidence="1">Nucleus</location>
        <location evidence="1">Nucleolus</location>
    </subcellularLocation>
</comment>
<comment type="similarity">
    <text evidence="3">Belongs to the ESF2/ABP1 family.</text>
</comment>
<accession>Q6CSP8</accession>
<name>ESF2_KLULA</name>
<protein>
    <recommendedName>
        <fullName>Pre-rRNA-processing protein ESF2</fullName>
    </recommendedName>
    <alternativeName>
        <fullName>18S rRNA factor 2</fullName>
    </alternativeName>
</protein>
<dbReference type="EMBL" id="CR382123">
    <property type="protein sequence ID" value="CAH01892.1"/>
    <property type="molecule type" value="Genomic_DNA"/>
</dbReference>
<dbReference type="RefSeq" id="XP_453041.1">
    <property type="nucleotide sequence ID" value="XM_453041.1"/>
</dbReference>
<dbReference type="FunCoup" id="Q6CSP8">
    <property type="interactions" value="1013"/>
</dbReference>
<dbReference type="STRING" id="284590.Q6CSP8"/>
<dbReference type="PaxDb" id="284590-Q6CSP8"/>
<dbReference type="KEGG" id="kla:KLLA0_C18865g"/>
<dbReference type="eggNOG" id="KOG3152">
    <property type="taxonomic scope" value="Eukaryota"/>
</dbReference>
<dbReference type="HOGENOM" id="CLU_054086_0_0_1"/>
<dbReference type="InParanoid" id="Q6CSP8"/>
<dbReference type="OMA" id="TRKHNDF"/>
<dbReference type="Proteomes" id="UP000000598">
    <property type="component" value="Chromosome C"/>
</dbReference>
<dbReference type="GO" id="GO:0005730">
    <property type="term" value="C:nucleolus"/>
    <property type="evidence" value="ECO:0007669"/>
    <property type="project" value="UniProtKB-SubCell"/>
</dbReference>
<dbReference type="GO" id="GO:0003723">
    <property type="term" value="F:RNA binding"/>
    <property type="evidence" value="ECO:0007669"/>
    <property type="project" value="UniProtKB-KW"/>
</dbReference>
<dbReference type="GO" id="GO:0000480">
    <property type="term" value="P:endonucleolytic cleavage in 5'-ETS of tricistronic rRNA transcript (SSU-rRNA, 5.8S rRNA, LSU-rRNA)"/>
    <property type="evidence" value="ECO:0007669"/>
    <property type="project" value="TreeGrafter"/>
</dbReference>
<dbReference type="GO" id="GO:0000447">
    <property type="term" value="P:endonucleolytic cleavage in ITS1 to separate SSU-rRNA from 5.8S rRNA and LSU-rRNA from tricistronic rRNA transcript (SSU-rRNA, 5.8S rRNA, LSU-rRNA)"/>
    <property type="evidence" value="ECO:0007669"/>
    <property type="project" value="TreeGrafter"/>
</dbReference>
<dbReference type="GO" id="GO:0000472">
    <property type="term" value="P:endonucleolytic cleavage to generate mature 5'-end of SSU-rRNA from (SSU-rRNA, 5.8S rRNA, LSU-rRNA)"/>
    <property type="evidence" value="ECO:0007669"/>
    <property type="project" value="TreeGrafter"/>
</dbReference>
<dbReference type="GO" id="GO:0034462">
    <property type="term" value="P:small-subunit processome assembly"/>
    <property type="evidence" value="ECO:0007669"/>
    <property type="project" value="TreeGrafter"/>
</dbReference>
<dbReference type="CDD" id="cd12263">
    <property type="entry name" value="RRM_ABT1_like"/>
    <property type="match status" value="1"/>
</dbReference>
<dbReference type="FunFam" id="3.30.70.330:FF:000825">
    <property type="entry name" value="Pre-rRNA-processing protein ESF2"/>
    <property type="match status" value="1"/>
</dbReference>
<dbReference type="Gene3D" id="3.30.70.330">
    <property type="match status" value="1"/>
</dbReference>
<dbReference type="InterPro" id="IPR039119">
    <property type="entry name" value="ABT1/Esf2"/>
</dbReference>
<dbReference type="InterPro" id="IPR034353">
    <property type="entry name" value="ABT1/ESF2_RRM"/>
</dbReference>
<dbReference type="InterPro" id="IPR012677">
    <property type="entry name" value="Nucleotide-bd_a/b_plait_sf"/>
</dbReference>
<dbReference type="InterPro" id="IPR035979">
    <property type="entry name" value="RBD_domain_sf"/>
</dbReference>
<dbReference type="PANTHER" id="PTHR12311">
    <property type="entry name" value="ACTIVATOR OF BASAL TRANSCRIPTION 1"/>
    <property type="match status" value="1"/>
</dbReference>
<dbReference type="PANTHER" id="PTHR12311:SF7">
    <property type="entry name" value="ACTIVATOR OF BASAL TRANSCRIPTION 1"/>
    <property type="match status" value="1"/>
</dbReference>
<dbReference type="SUPFAM" id="SSF54928">
    <property type="entry name" value="RNA-binding domain, RBD"/>
    <property type="match status" value="1"/>
</dbReference>
<feature type="chain" id="PRO_0000285374" description="Pre-rRNA-processing protein ESF2">
    <location>
        <begin position="1"/>
        <end position="293"/>
    </location>
</feature>
<feature type="domain" description="RRM">
    <location>
        <begin position="91"/>
        <end position="181"/>
    </location>
</feature>
<feature type="region of interest" description="Disordered" evidence="2">
    <location>
        <begin position="1"/>
        <end position="68"/>
    </location>
</feature>
<feature type="region of interest" description="Disordered" evidence="2">
    <location>
        <begin position="234"/>
        <end position="286"/>
    </location>
</feature>
<feature type="compositionally biased region" description="Acidic residues" evidence="2">
    <location>
        <begin position="7"/>
        <end position="19"/>
    </location>
</feature>
<feature type="compositionally biased region" description="Acidic residues" evidence="2">
    <location>
        <begin position="36"/>
        <end position="58"/>
    </location>
</feature>
<feature type="compositionally biased region" description="Basic residues" evidence="2">
    <location>
        <begin position="234"/>
        <end position="243"/>
    </location>
</feature>
<feature type="compositionally biased region" description="Polar residues" evidence="2">
    <location>
        <begin position="267"/>
        <end position="284"/>
    </location>
</feature>
<sequence length="293" mass="34348">MSKEYSDVDDFASDEEEDNQVLITGKDAKKNVIQFDQEEDEEEQEEEDEEVQDEEEPEDKVVQLTEQQIEKEKQRRLKKLKSDKKTKHKTGVVYLSRVPPYMKPAKLRQILTRFGEVDRLFLKREEEHKHQQRVKSGGNKKTMFEEGWAEFIRKKDAKLCASTLNGNIIGGKKGNFYHDDVMNVKYLPGFKWADLTEQIARENDIRQAKLQLEISQANKLNAEFIHNVEKSKMVNKMKQSKKRNQQESQQVDEEVRRTFKQRKVASTRASAPDSQRQSQPQSKALNDVMHSLF</sequence>
<keyword id="KW-0539">Nucleus</keyword>
<keyword id="KW-1185">Reference proteome</keyword>
<keyword id="KW-0690">Ribosome biogenesis</keyword>
<keyword id="KW-0694">RNA-binding</keyword>
<keyword id="KW-0698">rRNA processing</keyword>
<proteinExistence type="inferred from homology"/>
<reference key="1">
    <citation type="journal article" date="2004" name="Nature">
        <title>Genome evolution in yeasts.</title>
        <authorList>
            <person name="Dujon B."/>
            <person name="Sherman D."/>
            <person name="Fischer G."/>
            <person name="Durrens P."/>
            <person name="Casaregola S."/>
            <person name="Lafontaine I."/>
            <person name="de Montigny J."/>
            <person name="Marck C."/>
            <person name="Neuveglise C."/>
            <person name="Talla E."/>
            <person name="Goffard N."/>
            <person name="Frangeul L."/>
            <person name="Aigle M."/>
            <person name="Anthouard V."/>
            <person name="Babour A."/>
            <person name="Barbe V."/>
            <person name="Barnay S."/>
            <person name="Blanchin S."/>
            <person name="Beckerich J.-M."/>
            <person name="Beyne E."/>
            <person name="Bleykasten C."/>
            <person name="Boisrame A."/>
            <person name="Boyer J."/>
            <person name="Cattolico L."/>
            <person name="Confanioleri F."/>
            <person name="de Daruvar A."/>
            <person name="Despons L."/>
            <person name="Fabre E."/>
            <person name="Fairhead C."/>
            <person name="Ferry-Dumazet H."/>
            <person name="Groppi A."/>
            <person name="Hantraye F."/>
            <person name="Hennequin C."/>
            <person name="Jauniaux N."/>
            <person name="Joyet P."/>
            <person name="Kachouri R."/>
            <person name="Kerrest A."/>
            <person name="Koszul R."/>
            <person name="Lemaire M."/>
            <person name="Lesur I."/>
            <person name="Ma L."/>
            <person name="Muller H."/>
            <person name="Nicaud J.-M."/>
            <person name="Nikolski M."/>
            <person name="Oztas S."/>
            <person name="Ozier-Kalogeropoulos O."/>
            <person name="Pellenz S."/>
            <person name="Potier S."/>
            <person name="Richard G.-F."/>
            <person name="Straub M.-L."/>
            <person name="Suleau A."/>
            <person name="Swennen D."/>
            <person name="Tekaia F."/>
            <person name="Wesolowski-Louvel M."/>
            <person name="Westhof E."/>
            <person name="Wirth B."/>
            <person name="Zeniou-Meyer M."/>
            <person name="Zivanovic Y."/>
            <person name="Bolotin-Fukuhara M."/>
            <person name="Thierry A."/>
            <person name="Bouchier C."/>
            <person name="Caudron B."/>
            <person name="Scarpelli C."/>
            <person name="Gaillardin C."/>
            <person name="Weissenbach J."/>
            <person name="Wincker P."/>
            <person name="Souciet J.-L."/>
        </authorList>
    </citation>
    <scope>NUCLEOTIDE SEQUENCE [LARGE SCALE GENOMIC DNA]</scope>
    <source>
        <strain>ATCC 8585 / CBS 2359 / DSM 70799 / NBRC 1267 / NRRL Y-1140 / WM37</strain>
    </source>
</reference>
<organism>
    <name type="scientific">Kluyveromyces lactis (strain ATCC 8585 / CBS 2359 / DSM 70799 / NBRC 1267 / NRRL Y-1140 / WM37)</name>
    <name type="common">Yeast</name>
    <name type="synonym">Candida sphaerica</name>
    <dbReference type="NCBI Taxonomy" id="284590"/>
    <lineage>
        <taxon>Eukaryota</taxon>
        <taxon>Fungi</taxon>
        <taxon>Dikarya</taxon>
        <taxon>Ascomycota</taxon>
        <taxon>Saccharomycotina</taxon>
        <taxon>Saccharomycetes</taxon>
        <taxon>Saccharomycetales</taxon>
        <taxon>Saccharomycetaceae</taxon>
        <taxon>Kluyveromyces</taxon>
    </lineage>
</organism>
<gene>
    <name type="primary">ESF2</name>
    <name type="ordered locus">KLLA0C18865g</name>
</gene>
<evidence type="ECO:0000250" key="1"/>
<evidence type="ECO:0000256" key="2">
    <source>
        <dbReference type="SAM" id="MobiDB-lite"/>
    </source>
</evidence>
<evidence type="ECO:0000305" key="3"/>